<accession>A1T4L4</accession>
<dbReference type="EMBL" id="CP000511">
    <property type="protein sequence ID" value="ABM12114.1"/>
    <property type="molecule type" value="Genomic_DNA"/>
</dbReference>
<dbReference type="RefSeq" id="WP_011778546.1">
    <property type="nucleotide sequence ID" value="NZ_JACKSD010000069.1"/>
</dbReference>
<dbReference type="SMR" id="A1T4L4"/>
<dbReference type="STRING" id="350058.Mvan_1280"/>
<dbReference type="KEGG" id="mva:Mvan_1280"/>
<dbReference type="eggNOG" id="COG0049">
    <property type="taxonomic scope" value="Bacteria"/>
</dbReference>
<dbReference type="HOGENOM" id="CLU_072226_1_1_11"/>
<dbReference type="Proteomes" id="UP000009159">
    <property type="component" value="Chromosome"/>
</dbReference>
<dbReference type="GO" id="GO:0015935">
    <property type="term" value="C:small ribosomal subunit"/>
    <property type="evidence" value="ECO:0007669"/>
    <property type="project" value="InterPro"/>
</dbReference>
<dbReference type="GO" id="GO:0019843">
    <property type="term" value="F:rRNA binding"/>
    <property type="evidence" value="ECO:0007669"/>
    <property type="project" value="UniProtKB-UniRule"/>
</dbReference>
<dbReference type="GO" id="GO:0003735">
    <property type="term" value="F:structural constituent of ribosome"/>
    <property type="evidence" value="ECO:0007669"/>
    <property type="project" value="InterPro"/>
</dbReference>
<dbReference type="GO" id="GO:0000049">
    <property type="term" value="F:tRNA binding"/>
    <property type="evidence" value="ECO:0007669"/>
    <property type="project" value="UniProtKB-UniRule"/>
</dbReference>
<dbReference type="GO" id="GO:0006412">
    <property type="term" value="P:translation"/>
    <property type="evidence" value="ECO:0007669"/>
    <property type="project" value="UniProtKB-UniRule"/>
</dbReference>
<dbReference type="CDD" id="cd14869">
    <property type="entry name" value="uS7_Bacteria"/>
    <property type="match status" value="1"/>
</dbReference>
<dbReference type="FunFam" id="1.10.455.10:FF:000001">
    <property type="entry name" value="30S ribosomal protein S7"/>
    <property type="match status" value="1"/>
</dbReference>
<dbReference type="Gene3D" id="1.10.455.10">
    <property type="entry name" value="Ribosomal protein S7 domain"/>
    <property type="match status" value="1"/>
</dbReference>
<dbReference type="HAMAP" id="MF_00480_B">
    <property type="entry name" value="Ribosomal_uS7_B"/>
    <property type="match status" value="1"/>
</dbReference>
<dbReference type="InterPro" id="IPR000235">
    <property type="entry name" value="Ribosomal_uS7"/>
</dbReference>
<dbReference type="InterPro" id="IPR005717">
    <property type="entry name" value="Ribosomal_uS7_bac/org-type"/>
</dbReference>
<dbReference type="InterPro" id="IPR020606">
    <property type="entry name" value="Ribosomal_uS7_CS"/>
</dbReference>
<dbReference type="InterPro" id="IPR023798">
    <property type="entry name" value="Ribosomal_uS7_dom"/>
</dbReference>
<dbReference type="InterPro" id="IPR036823">
    <property type="entry name" value="Ribosomal_uS7_dom_sf"/>
</dbReference>
<dbReference type="NCBIfam" id="TIGR01029">
    <property type="entry name" value="rpsG_bact"/>
    <property type="match status" value="1"/>
</dbReference>
<dbReference type="PANTHER" id="PTHR11205">
    <property type="entry name" value="RIBOSOMAL PROTEIN S7"/>
    <property type="match status" value="1"/>
</dbReference>
<dbReference type="Pfam" id="PF00177">
    <property type="entry name" value="Ribosomal_S7"/>
    <property type="match status" value="1"/>
</dbReference>
<dbReference type="PIRSF" id="PIRSF002122">
    <property type="entry name" value="RPS7p_RPS7a_RPS5e_RPS7o"/>
    <property type="match status" value="1"/>
</dbReference>
<dbReference type="SUPFAM" id="SSF47973">
    <property type="entry name" value="Ribosomal protein S7"/>
    <property type="match status" value="1"/>
</dbReference>
<dbReference type="PROSITE" id="PS00052">
    <property type="entry name" value="RIBOSOMAL_S7"/>
    <property type="match status" value="1"/>
</dbReference>
<sequence length="156" mass="17518">MPRKGPAPKRPLVNDPVYGSQLVTQLVNKVLLDGKKSLAERIVYGALEQAREKTGTDPVVTLKRAMDNVKPSLEVRSRRVGGATYQVPVEVRPDRSVTLALRWLVSFSKARREKTMVERLANEILDASNGLGAAVKRREDTHKMAEANRAFAHYRW</sequence>
<organism>
    <name type="scientific">Mycolicibacterium vanbaalenii (strain DSM 7251 / JCM 13017 / BCRC 16820 / KCTC 9966 / NRRL B-24157 / PYR-1)</name>
    <name type="common">Mycobacterium vanbaalenii</name>
    <dbReference type="NCBI Taxonomy" id="350058"/>
    <lineage>
        <taxon>Bacteria</taxon>
        <taxon>Bacillati</taxon>
        <taxon>Actinomycetota</taxon>
        <taxon>Actinomycetes</taxon>
        <taxon>Mycobacteriales</taxon>
        <taxon>Mycobacteriaceae</taxon>
        <taxon>Mycolicibacterium</taxon>
    </lineage>
</organism>
<reference key="1">
    <citation type="submission" date="2006-12" db="EMBL/GenBank/DDBJ databases">
        <title>Complete sequence of Mycobacterium vanbaalenii PYR-1.</title>
        <authorList>
            <consortium name="US DOE Joint Genome Institute"/>
            <person name="Copeland A."/>
            <person name="Lucas S."/>
            <person name="Lapidus A."/>
            <person name="Barry K."/>
            <person name="Detter J.C."/>
            <person name="Glavina del Rio T."/>
            <person name="Hammon N."/>
            <person name="Israni S."/>
            <person name="Dalin E."/>
            <person name="Tice H."/>
            <person name="Pitluck S."/>
            <person name="Singan V."/>
            <person name="Schmutz J."/>
            <person name="Larimer F."/>
            <person name="Land M."/>
            <person name="Hauser L."/>
            <person name="Kyrpides N."/>
            <person name="Anderson I.J."/>
            <person name="Miller C."/>
            <person name="Richardson P."/>
        </authorList>
    </citation>
    <scope>NUCLEOTIDE SEQUENCE [LARGE SCALE GENOMIC DNA]</scope>
    <source>
        <strain>DSM 7251 / JCM 13017 / BCRC 16820 / KCTC 9966 / NRRL B-24157 / PYR-1</strain>
    </source>
</reference>
<proteinExistence type="inferred from homology"/>
<gene>
    <name evidence="1" type="primary">rpsG</name>
    <name type="ordered locus">Mvan_1280</name>
</gene>
<evidence type="ECO:0000255" key="1">
    <source>
        <dbReference type="HAMAP-Rule" id="MF_00480"/>
    </source>
</evidence>
<evidence type="ECO:0000305" key="2"/>
<name>RS7_MYCVP</name>
<comment type="function">
    <text evidence="1">One of the primary rRNA binding proteins, it binds directly to 16S rRNA where it nucleates assembly of the head domain of the 30S subunit. Is located at the subunit interface close to the decoding center, probably blocks exit of the E-site tRNA.</text>
</comment>
<comment type="subunit">
    <text evidence="1">Part of the 30S ribosomal subunit. Contacts proteins S9 and S11.</text>
</comment>
<comment type="similarity">
    <text evidence="1">Belongs to the universal ribosomal protein uS7 family.</text>
</comment>
<protein>
    <recommendedName>
        <fullName evidence="1">Small ribosomal subunit protein uS7</fullName>
    </recommendedName>
    <alternativeName>
        <fullName evidence="2">30S ribosomal protein S7</fullName>
    </alternativeName>
</protein>
<feature type="chain" id="PRO_1000014240" description="Small ribosomal subunit protein uS7">
    <location>
        <begin position="1"/>
        <end position="156"/>
    </location>
</feature>
<keyword id="KW-0687">Ribonucleoprotein</keyword>
<keyword id="KW-0689">Ribosomal protein</keyword>
<keyword id="KW-0694">RNA-binding</keyword>
<keyword id="KW-0699">rRNA-binding</keyword>
<keyword id="KW-0820">tRNA-binding</keyword>